<sequence length="291" mass="31229">MKIAILSRNSKLYSTRRLIEAGRTRGHTVRILDPLRCYMRIAADGFSLHYKGKPITGFDAVIPRIGASVTRYGTAVLRQFEFMGTYTPNPSDAILRSRDKLRAHQLLASQGIDMPVTVFGDNPDDTQDLLSMLGPPPHVVKLNEGAQGAGVILTEKASASRGVVEALRGLYANFIVQEFIGEAEGADLRCFVVGDRVVAAMRRQAADGDFRSNLHLGGTAAMAEASPQEQDVAVRSARALGLAVAGVDLIRSQRGPLVLEVNSTPGLEGVEGVCGVDVAGTIIQHLEQAIR</sequence>
<feature type="chain" id="PRO_0000340569" description="Probable alpha-L-glutamate ligase">
    <location>
        <begin position="1"/>
        <end position="291"/>
    </location>
</feature>
<feature type="domain" description="ATP-grasp" evidence="1">
    <location>
        <begin position="104"/>
        <end position="287"/>
    </location>
</feature>
<feature type="binding site" evidence="1">
    <location>
        <position position="141"/>
    </location>
    <ligand>
        <name>ATP</name>
        <dbReference type="ChEBI" id="CHEBI:30616"/>
    </ligand>
</feature>
<feature type="binding site" evidence="1">
    <location>
        <begin position="178"/>
        <end position="179"/>
    </location>
    <ligand>
        <name>ATP</name>
        <dbReference type="ChEBI" id="CHEBI:30616"/>
    </ligand>
</feature>
<feature type="binding site" evidence="1">
    <location>
        <position position="187"/>
    </location>
    <ligand>
        <name>ATP</name>
        <dbReference type="ChEBI" id="CHEBI:30616"/>
    </ligand>
</feature>
<feature type="binding site" evidence="1">
    <location>
        <begin position="211"/>
        <end position="213"/>
    </location>
    <ligand>
        <name>ATP</name>
        <dbReference type="ChEBI" id="CHEBI:30616"/>
    </ligand>
</feature>
<feature type="binding site" evidence="1">
    <location>
        <position position="248"/>
    </location>
    <ligand>
        <name>Mg(2+)</name>
        <dbReference type="ChEBI" id="CHEBI:18420"/>
        <label>1</label>
    </ligand>
</feature>
<feature type="binding site" evidence="1">
    <location>
        <position position="248"/>
    </location>
    <ligand>
        <name>Mn(2+)</name>
        <dbReference type="ChEBI" id="CHEBI:29035"/>
        <label>1</label>
    </ligand>
</feature>
<feature type="binding site" evidence="1">
    <location>
        <position position="260"/>
    </location>
    <ligand>
        <name>Mg(2+)</name>
        <dbReference type="ChEBI" id="CHEBI:18420"/>
        <label>1</label>
    </ligand>
</feature>
<feature type="binding site" evidence="1">
    <location>
        <position position="260"/>
    </location>
    <ligand>
        <name>Mg(2+)</name>
        <dbReference type="ChEBI" id="CHEBI:18420"/>
        <label>2</label>
    </ligand>
</feature>
<feature type="binding site" evidence="1">
    <location>
        <position position="260"/>
    </location>
    <ligand>
        <name>Mn(2+)</name>
        <dbReference type="ChEBI" id="CHEBI:29035"/>
        <label>1</label>
    </ligand>
</feature>
<feature type="binding site" evidence="1">
    <location>
        <position position="260"/>
    </location>
    <ligand>
        <name>Mn(2+)</name>
        <dbReference type="ChEBI" id="CHEBI:29035"/>
        <label>2</label>
    </ligand>
</feature>
<feature type="binding site" evidence="1">
    <location>
        <position position="262"/>
    </location>
    <ligand>
        <name>Mg(2+)</name>
        <dbReference type="ChEBI" id="CHEBI:18420"/>
        <label>2</label>
    </ligand>
</feature>
<feature type="binding site" evidence="1">
    <location>
        <position position="262"/>
    </location>
    <ligand>
        <name>Mn(2+)</name>
        <dbReference type="ChEBI" id="CHEBI:29035"/>
        <label>2</label>
    </ligand>
</feature>
<dbReference type="EC" id="6.3.2.-" evidence="1"/>
<dbReference type="EMBL" id="AM920689">
    <property type="protein sequence ID" value="CAP50427.1"/>
    <property type="status" value="ALT_INIT"/>
    <property type="molecule type" value="Genomic_DNA"/>
</dbReference>
<dbReference type="SMR" id="B0RPP2"/>
<dbReference type="KEGG" id="xca:xcc-b100_1079"/>
<dbReference type="HOGENOM" id="CLU_054353_0_1_6"/>
<dbReference type="Proteomes" id="UP000001188">
    <property type="component" value="Chromosome"/>
</dbReference>
<dbReference type="GO" id="GO:0005737">
    <property type="term" value="C:cytoplasm"/>
    <property type="evidence" value="ECO:0007669"/>
    <property type="project" value="TreeGrafter"/>
</dbReference>
<dbReference type="GO" id="GO:0005524">
    <property type="term" value="F:ATP binding"/>
    <property type="evidence" value="ECO:0007669"/>
    <property type="project" value="UniProtKB-UniRule"/>
</dbReference>
<dbReference type="GO" id="GO:0046872">
    <property type="term" value="F:metal ion binding"/>
    <property type="evidence" value="ECO:0007669"/>
    <property type="project" value="UniProtKB-KW"/>
</dbReference>
<dbReference type="GO" id="GO:0018169">
    <property type="term" value="F:ribosomal S6-glutamic acid ligase activity"/>
    <property type="evidence" value="ECO:0007669"/>
    <property type="project" value="TreeGrafter"/>
</dbReference>
<dbReference type="GO" id="GO:0036211">
    <property type="term" value="P:protein modification process"/>
    <property type="evidence" value="ECO:0007669"/>
    <property type="project" value="InterPro"/>
</dbReference>
<dbReference type="GO" id="GO:0009432">
    <property type="term" value="P:SOS response"/>
    <property type="evidence" value="ECO:0007669"/>
    <property type="project" value="TreeGrafter"/>
</dbReference>
<dbReference type="GO" id="GO:0006412">
    <property type="term" value="P:translation"/>
    <property type="evidence" value="ECO:0007669"/>
    <property type="project" value="UniProtKB-KW"/>
</dbReference>
<dbReference type="FunFam" id="3.40.50.20:FF:000004">
    <property type="entry name" value="Probable alpha-L-glutamate ligase"/>
    <property type="match status" value="1"/>
</dbReference>
<dbReference type="FunFam" id="3.30.1490.20:FF:000005">
    <property type="entry name" value="Probable alpha-L-glutamate ligase 1"/>
    <property type="match status" value="1"/>
</dbReference>
<dbReference type="Gene3D" id="3.40.50.20">
    <property type="match status" value="1"/>
</dbReference>
<dbReference type="Gene3D" id="3.30.1490.20">
    <property type="entry name" value="ATP-grasp fold, A domain"/>
    <property type="match status" value="1"/>
</dbReference>
<dbReference type="Gene3D" id="3.30.470.20">
    <property type="entry name" value="ATP-grasp fold, B domain"/>
    <property type="match status" value="1"/>
</dbReference>
<dbReference type="HAMAP" id="MF_01552">
    <property type="entry name" value="RimK"/>
    <property type="match status" value="1"/>
</dbReference>
<dbReference type="InterPro" id="IPR011761">
    <property type="entry name" value="ATP-grasp"/>
</dbReference>
<dbReference type="InterPro" id="IPR013651">
    <property type="entry name" value="ATP-grasp_RimK-type"/>
</dbReference>
<dbReference type="InterPro" id="IPR013815">
    <property type="entry name" value="ATP_grasp_subdomain_1"/>
</dbReference>
<dbReference type="InterPro" id="IPR023533">
    <property type="entry name" value="RimK"/>
</dbReference>
<dbReference type="InterPro" id="IPR041107">
    <property type="entry name" value="Rimk_N"/>
</dbReference>
<dbReference type="InterPro" id="IPR004666">
    <property type="entry name" value="Rp_bS6_RimK/Lys_biosynth_LsyX"/>
</dbReference>
<dbReference type="NCBIfam" id="NF007764">
    <property type="entry name" value="PRK10446.1"/>
    <property type="match status" value="1"/>
</dbReference>
<dbReference type="NCBIfam" id="TIGR00768">
    <property type="entry name" value="rimK_fam"/>
    <property type="match status" value="1"/>
</dbReference>
<dbReference type="PANTHER" id="PTHR21621:SF7">
    <property type="entry name" value="RIBOSOMAL PROTEIN BS6--L-GLUTAMATE LIGASE"/>
    <property type="match status" value="1"/>
</dbReference>
<dbReference type="PANTHER" id="PTHR21621">
    <property type="entry name" value="RIBOSOMAL PROTEIN S6 MODIFICATION PROTEIN"/>
    <property type="match status" value="1"/>
</dbReference>
<dbReference type="Pfam" id="PF08443">
    <property type="entry name" value="RimK"/>
    <property type="match status" value="1"/>
</dbReference>
<dbReference type="Pfam" id="PF18030">
    <property type="entry name" value="Rimk_N"/>
    <property type="match status" value="1"/>
</dbReference>
<dbReference type="SUPFAM" id="SSF56059">
    <property type="entry name" value="Glutathione synthetase ATP-binding domain-like"/>
    <property type="match status" value="1"/>
</dbReference>
<dbReference type="PROSITE" id="PS50975">
    <property type="entry name" value="ATP_GRASP"/>
    <property type="match status" value="1"/>
</dbReference>
<gene>
    <name evidence="1" type="primary">rimK</name>
    <name type="ordered locus">xcc-b100_1079</name>
</gene>
<evidence type="ECO:0000255" key="1">
    <source>
        <dbReference type="HAMAP-Rule" id="MF_01552"/>
    </source>
</evidence>
<evidence type="ECO:0000305" key="2"/>
<protein>
    <recommendedName>
        <fullName evidence="1">Probable alpha-L-glutamate ligase</fullName>
        <ecNumber evidence="1">6.3.2.-</ecNumber>
    </recommendedName>
</protein>
<proteinExistence type="inferred from homology"/>
<organism>
    <name type="scientific">Xanthomonas campestris pv. campestris (strain B100)</name>
    <dbReference type="NCBI Taxonomy" id="509169"/>
    <lineage>
        <taxon>Bacteria</taxon>
        <taxon>Pseudomonadati</taxon>
        <taxon>Pseudomonadota</taxon>
        <taxon>Gammaproteobacteria</taxon>
        <taxon>Lysobacterales</taxon>
        <taxon>Lysobacteraceae</taxon>
        <taxon>Xanthomonas</taxon>
    </lineage>
</organism>
<accession>B0RPP2</accession>
<reference key="1">
    <citation type="journal article" date="2008" name="J. Biotechnol.">
        <title>The genome of Xanthomonas campestris pv. campestris B100 and its use for the reconstruction of metabolic pathways involved in xanthan biosynthesis.</title>
        <authorList>
            <person name="Vorhoelter F.-J."/>
            <person name="Schneiker S."/>
            <person name="Goesmann A."/>
            <person name="Krause L."/>
            <person name="Bekel T."/>
            <person name="Kaiser O."/>
            <person name="Linke B."/>
            <person name="Patschkowski T."/>
            <person name="Rueckert C."/>
            <person name="Schmid J."/>
            <person name="Sidhu V.K."/>
            <person name="Sieber V."/>
            <person name="Tauch A."/>
            <person name="Watt S.A."/>
            <person name="Weisshaar B."/>
            <person name="Becker A."/>
            <person name="Niehaus K."/>
            <person name="Puehler A."/>
        </authorList>
    </citation>
    <scope>NUCLEOTIDE SEQUENCE [LARGE SCALE GENOMIC DNA]</scope>
    <source>
        <strain>B100</strain>
    </source>
</reference>
<keyword id="KW-0067">ATP-binding</keyword>
<keyword id="KW-0436">Ligase</keyword>
<keyword id="KW-0460">Magnesium</keyword>
<keyword id="KW-0464">Manganese</keyword>
<keyword id="KW-0479">Metal-binding</keyword>
<keyword id="KW-0547">Nucleotide-binding</keyword>
<keyword id="KW-0648">Protein biosynthesis</keyword>
<name>RIMK_XANCB</name>
<comment type="cofactor">
    <cofactor evidence="1">
        <name>Mg(2+)</name>
        <dbReference type="ChEBI" id="CHEBI:18420"/>
    </cofactor>
    <cofactor evidence="1">
        <name>Mn(2+)</name>
        <dbReference type="ChEBI" id="CHEBI:29035"/>
    </cofactor>
    <text evidence="1">Binds 2 magnesium or manganese ions per subunit.</text>
</comment>
<comment type="similarity">
    <text evidence="1">Belongs to the RimK family.</text>
</comment>
<comment type="sequence caution" evidence="2">
    <conflict type="erroneous initiation">
        <sequence resource="EMBL-CDS" id="CAP50427"/>
    </conflict>
</comment>